<organism>
    <name type="scientific">Methanosarcina acetivorans (strain ATCC 35395 / DSM 2834 / JCM 12185 / C2A)</name>
    <dbReference type="NCBI Taxonomy" id="188937"/>
    <lineage>
        <taxon>Archaea</taxon>
        <taxon>Methanobacteriati</taxon>
        <taxon>Methanobacteriota</taxon>
        <taxon>Stenosarchaea group</taxon>
        <taxon>Methanomicrobia</taxon>
        <taxon>Methanosarcinales</taxon>
        <taxon>Methanosarcinaceae</taxon>
        <taxon>Methanosarcina</taxon>
    </lineage>
</organism>
<evidence type="ECO:0000255" key="1">
    <source>
        <dbReference type="HAMAP-Rule" id="MF_00096"/>
    </source>
</evidence>
<dbReference type="EMBL" id="AE010299">
    <property type="protein sequence ID" value="AAM03967.1"/>
    <property type="molecule type" value="Genomic_DNA"/>
</dbReference>
<dbReference type="RefSeq" id="WP_011020572.1">
    <property type="nucleotide sequence ID" value="NC_003552.1"/>
</dbReference>
<dbReference type="SMR" id="Q8TTB4"/>
<dbReference type="STRING" id="188937.MA_0523"/>
<dbReference type="EnsemblBacteria" id="AAM03967">
    <property type="protein sequence ID" value="AAM03967"/>
    <property type="gene ID" value="MA_0523"/>
</dbReference>
<dbReference type="GeneID" id="1472415"/>
<dbReference type="KEGG" id="mac:MA_0523"/>
<dbReference type="HOGENOM" id="CLU_002472_3_1_2"/>
<dbReference type="InParanoid" id="Q8TTB4"/>
<dbReference type="OrthoDB" id="146065at2157"/>
<dbReference type="PhylomeDB" id="Q8TTB4"/>
<dbReference type="Proteomes" id="UP000002487">
    <property type="component" value="Chromosome"/>
</dbReference>
<dbReference type="GO" id="GO:0005524">
    <property type="term" value="F:ATP binding"/>
    <property type="evidence" value="ECO:0007669"/>
    <property type="project" value="UniProtKB-UniRule"/>
</dbReference>
<dbReference type="GO" id="GO:0140664">
    <property type="term" value="F:ATP-dependent DNA damage sensor activity"/>
    <property type="evidence" value="ECO:0007669"/>
    <property type="project" value="InterPro"/>
</dbReference>
<dbReference type="GO" id="GO:0003684">
    <property type="term" value="F:damaged DNA binding"/>
    <property type="evidence" value="ECO:0007669"/>
    <property type="project" value="UniProtKB-UniRule"/>
</dbReference>
<dbReference type="GO" id="GO:0003690">
    <property type="term" value="F:double-stranded DNA binding"/>
    <property type="evidence" value="ECO:0000318"/>
    <property type="project" value="GO_Central"/>
</dbReference>
<dbReference type="GO" id="GO:0030983">
    <property type="term" value="F:mismatched DNA binding"/>
    <property type="evidence" value="ECO:0007669"/>
    <property type="project" value="InterPro"/>
</dbReference>
<dbReference type="GO" id="GO:0006298">
    <property type="term" value="P:mismatch repair"/>
    <property type="evidence" value="ECO:0007669"/>
    <property type="project" value="UniProtKB-UniRule"/>
</dbReference>
<dbReference type="CDD" id="cd03284">
    <property type="entry name" value="ABC_MutS1"/>
    <property type="match status" value="1"/>
</dbReference>
<dbReference type="FunFam" id="1.10.1420.10:FF:000007">
    <property type="entry name" value="DNA mismatch repair protein MutS"/>
    <property type="match status" value="1"/>
</dbReference>
<dbReference type="FunFam" id="3.40.1170.10:FF:000001">
    <property type="entry name" value="DNA mismatch repair protein MutS"/>
    <property type="match status" value="1"/>
</dbReference>
<dbReference type="FunFam" id="3.40.50.300:FF:001579">
    <property type="entry name" value="DNA mismatch repair protein MutS"/>
    <property type="match status" value="1"/>
</dbReference>
<dbReference type="Gene3D" id="1.10.1420.10">
    <property type="match status" value="2"/>
</dbReference>
<dbReference type="Gene3D" id="6.10.140.430">
    <property type="match status" value="1"/>
</dbReference>
<dbReference type="Gene3D" id="3.40.1170.10">
    <property type="entry name" value="DNA repair protein MutS, domain I"/>
    <property type="match status" value="1"/>
</dbReference>
<dbReference type="Gene3D" id="3.30.420.110">
    <property type="entry name" value="MutS, connector domain"/>
    <property type="match status" value="1"/>
</dbReference>
<dbReference type="Gene3D" id="3.40.50.300">
    <property type="entry name" value="P-loop containing nucleotide triphosphate hydrolases"/>
    <property type="match status" value="1"/>
</dbReference>
<dbReference type="HAMAP" id="MF_00096">
    <property type="entry name" value="MutS"/>
    <property type="match status" value="1"/>
</dbReference>
<dbReference type="InterPro" id="IPR005748">
    <property type="entry name" value="DNA_mismatch_repair_MutS"/>
</dbReference>
<dbReference type="InterPro" id="IPR007695">
    <property type="entry name" value="DNA_mismatch_repair_MutS-lik_N"/>
</dbReference>
<dbReference type="InterPro" id="IPR017261">
    <property type="entry name" value="DNA_mismatch_repair_MutS/MSH"/>
</dbReference>
<dbReference type="InterPro" id="IPR000432">
    <property type="entry name" value="DNA_mismatch_repair_MutS_C"/>
</dbReference>
<dbReference type="InterPro" id="IPR007861">
    <property type="entry name" value="DNA_mismatch_repair_MutS_clamp"/>
</dbReference>
<dbReference type="InterPro" id="IPR007696">
    <property type="entry name" value="DNA_mismatch_repair_MutS_core"/>
</dbReference>
<dbReference type="InterPro" id="IPR016151">
    <property type="entry name" value="DNA_mismatch_repair_MutS_N"/>
</dbReference>
<dbReference type="InterPro" id="IPR036187">
    <property type="entry name" value="DNA_mismatch_repair_MutS_sf"/>
</dbReference>
<dbReference type="InterPro" id="IPR007860">
    <property type="entry name" value="DNA_mmatch_repair_MutS_con_dom"/>
</dbReference>
<dbReference type="InterPro" id="IPR045076">
    <property type="entry name" value="MutS"/>
</dbReference>
<dbReference type="InterPro" id="IPR036678">
    <property type="entry name" value="MutS_con_dom_sf"/>
</dbReference>
<dbReference type="InterPro" id="IPR027417">
    <property type="entry name" value="P-loop_NTPase"/>
</dbReference>
<dbReference type="NCBIfam" id="TIGR01070">
    <property type="entry name" value="mutS1"/>
    <property type="match status" value="1"/>
</dbReference>
<dbReference type="NCBIfam" id="NF003810">
    <property type="entry name" value="PRK05399.1"/>
    <property type="match status" value="1"/>
</dbReference>
<dbReference type="PANTHER" id="PTHR11361:SF34">
    <property type="entry name" value="DNA MISMATCH REPAIR PROTEIN MSH1, MITOCHONDRIAL"/>
    <property type="match status" value="1"/>
</dbReference>
<dbReference type="PANTHER" id="PTHR11361">
    <property type="entry name" value="DNA MISMATCH REPAIR PROTEIN MUTS FAMILY MEMBER"/>
    <property type="match status" value="1"/>
</dbReference>
<dbReference type="Pfam" id="PF01624">
    <property type="entry name" value="MutS_I"/>
    <property type="match status" value="1"/>
</dbReference>
<dbReference type="Pfam" id="PF05188">
    <property type="entry name" value="MutS_II"/>
    <property type="match status" value="1"/>
</dbReference>
<dbReference type="Pfam" id="PF05192">
    <property type="entry name" value="MutS_III"/>
    <property type="match status" value="1"/>
</dbReference>
<dbReference type="Pfam" id="PF05190">
    <property type="entry name" value="MutS_IV"/>
    <property type="match status" value="1"/>
</dbReference>
<dbReference type="Pfam" id="PF00488">
    <property type="entry name" value="MutS_V"/>
    <property type="match status" value="1"/>
</dbReference>
<dbReference type="PIRSF" id="PIRSF037677">
    <property type="entry name" value="DNA_mis_repair_Msh6"/>
    <property type="match status" value="1"/>
</dbReference>
<dbReference type="SMART" id="SM00534">
    <property type="entry name" value="MUTSac"/>
    <property type="match status" value="1"/>
</dbReference>
<dbReference type="SMART" id="SM00533">
    <property type="entry name" value="MUTSd"/>
    <property type="match status" value="1"/>
</dbReference>
<dbReference type="SUPFAM" id="SSF55271">
    <property type="entry name" value="DNA repair protein MutS, domain I"/>
    <property type="match status" value="1"/>
</dbReference>
<dbReference type="SUPFAM" id="SSF53150">
    <property type="entry name" value="DNA repair protein MutS, domain II"/>
    <property type="match status" value="1"/>
</dbReference>
<dbReference type="SUPFAM" id="SSF48334">
    <property type="entry name" value="DNA repair protein MutS, domain III"/>
    <property type="match status" value="1"/>
</dbReference>
<dbReference type="SUPFAM" id="SSF52540">
    <property type="entry name" value="P-loop containing nucleoside triphosphate hydrolases"/>
    <property type="match status" value="1"/>
</dbReference>
<dbReference type="PROSITE" id="PS00486">
    <property type="entry name" value="DNA_MISMATCH_REPAIR_2"/>
    <property type="match status" value="1"/>
</dbReference>
<name>MUTS_METAC</name>
<sequence length="900" mass="100646">MTEIMTPAMRQYYEAKQAYPDTLIFFRMGDFYESFGEDAKTIAKELEITLTARGKDRTGERMPLAGIPYHAIDTYLPRLINKGYKVAICEQLEDPKKAKGVVKRGVVRVVTPGTAIDSSMFSDASNNYLMAVAGREGGKSGKNGEKEMEFGISFLDISTGEFLTTQFTDSENFDKLLSELARMHPAECILPPSLYGNSELTGKLREHTIVQEFAPEVFGTEEAGEKLKTHFGVATLEGMGCQKLEFAVYSAWAALEYAKTTQMRDLTHINTLRTYSNTEFMILDSITLRNLEIVKNVRDEGDENSLYRTLNCTRTPMGNRTLKKWLLKPLLSVEKINPRLDAIEELAEDSLLRYDIRDWLSDVRDIERLVGRIVYGNASARDLVALKKSLGVVPSLRDSLLEKARFEMLKEIAEGLASFSELEELAEMIEIAIMDEPPVSVREGGMIKSGYSPELDELRDISSNSKQWIAAFQQKERERSGIKSLKVGYNKVFGYYIEVTHANSSQVPEDYIRKQTMANAERFFTPELKEKESLILTANEKAVALEYEIFAEITRTLSARSRELQETAERIGTLDVLASLAEATENNNYTRPQLTEDCKILIRDGRHPVVESTVSGGFVPNDTEMDCKENQFLLVTGPNMAGKSTYMRQTALIAIMAQVGSFVPASYASVGIIDQVFTRIGAFDDLASGQSTFMVEMVELANILNNASPKSLVLLDEIGRGTSTYDGYSIAKAVVEFLHNRGKVGIRALFATHYHQLTALEEKLKRVKNYHIAVKEDGHELVFLRKIVPGATDRSYGIHVARLAGVPEKVIERANEILKELERENVLEEAEDGENGKKKKSKATARYTQMLLFDPGSGSRSSEKAKGLSPVEAALKKVNPDEMTPIEALNKLHELKKLLG</sequence>
<keyword id="KW-0067">ATP-binding</keyword>
<keyword id="KW-0227">DNA damage</keyword>
<keyword id="KW-0234">DNA repair</keyword>
<keyword id="KW-0238">DNA-binding</keyword>
<keyword id="KW-0547">Nucleotide-binding</keyword>
<keyword id="KW-1185">Reference proteome</keyword>
<comment type="function">
    <text evidence="1">This protein is involved in the repair of mismatches in DNA. It is possible that it carries out the mismatch recognition step. This protein has a weak ATPase activity.</text>
</comment>
<comment type="similarity">
    <text evidence="1">Belongs to the DNA mismatch repair MutS family.</text>
</comment>
<feature type="chain" id="PRO_0000115177" description="DNA mismatch repair protein MutS">
    <location>
        <begin position="1"/>
        <end position="900"/>
    </location>
</feature>
<feature type="binding site" evidence="1">
    <location>
        <begin position="637"/>
        <end position="644"/>
    </location>
    <ligand>
        <name>ATP</name>
        <dbReference type="ChEBI" id="CHEBI:30616"/>
    </ligand>
</feature>
<accession>Q8TTB4</accession>
<protein>
    <recommendedName>
        <fullName evidence="1">DNA mismatch repair protein MutS</fullName>
    </recommendedName>
</protein>
<reference key="1">
    <citation type="journal article" date="2002" name="Genome Res.">
        <title>The genome of Methanosarcina acetivorans reveals extensive metabolic and physiological diversity.</title>
        <authorList>
            <person name="Galagan J.E."/>
            <person name="Nusbaum C."/>
            <person name="Roy A."/>
            <person name="Endrizzi M.G."/>
            <person name="Macdonald P."/>
            <person name="FitzHugh W."/>
            <person name="Calvo S."/>
            <person name="Engels R."/>
            <person name="Smirnov S."/>
            <person name="Atnoor D."/>
            <person name="Brown A."/>
            <person name="Allen N."/>
            <person name="Naylor J."/>
            <person name="Stange-Thomann N."/>
            <person name="DeArellano K."/>
            <person name="Johnson R."/>
            <person name="Linton L."/>
            <person name="McEwan P."/>
            <person name="McKernan K."/>
            <person name="Talamas J."/>
            <person name="Tirrell A."/>
            <person name="Ye W."/>
            <person name="Zimmer A."/>
            <person name="Barber R.D."/>
            <person name="Cann I."/>
            <person name="Graham D.E."/>
            <person name="Grahame D.A."/>
            <person name="Guss A.M."/>
            <person name="Hedderich R."/>
            <person name="Ingram-Smith C."/>
            <person name="Kuettner H.C."/>
            <person name="Krzycki J.A."/>
            <person name="Leigh J.A."/>
            <person name="Li W."/>
            <person name="Liu J."/>
            <person name="Mukhopadhyay B."/>
            <person name="Reeve J.N."/>
            <person name="Smith K."/>
            <person name="Springer T.A."/>
            <person name="Umayam L.A."/>
            <person name="White O."/>
            <person name="White R.H."/>
            <person name="de Macario E.C."/>
            <person name="Ferry J.G."/>
            <person name="Jarrell K.F."/>
            <person name="Jing H."/>
            <person name="Macario A.J.L."/>
            <person name="Paulsen I.T."/>
            <person name="Pritchett M."/>
            <person name="Sowers K.R."/>
            <person name="Swanson R.V."/>
            <person name="Zinder S.H."/>
            <person name="Lander E."/>
            <person name="Metcalf W.W."/>
            <person name="Birren B."/>
        </authorList>
    </citation>
    <scope>NUCLEOTIDE SEQUENCE [LARGE SCALE GENOMIC DNA]</scope>
    <source>
        <strain>ATCC 35395 / DSM 2834 / JCM 12185 / C2A</strain>
    </source>
</reference>
<proteinExistence type="inferred from homology"/>
<gene>
    <name evidence="1" type="primary">mutS</name>
    <name type="ordered locus">MA_0523</name>
</gene>